<sequence length="169" mass="19014">MKPSSSNSRSKGHAKARRKTREELDQEARDRKRLKKRRGHAPGSRAAGGNTTSGSKGQNAPKDPRIGSKTPIPLGVAEKVTKQHKPKSEKPMLSPQAELELLETDERLDALLERLEAGETLSAEEQSWVDAKLDRIDELMQKLGLSYDDDEEEEEDEKQEDMMRLLRGN</sequence>
<name>YIHI_ECOL5</name>
<keyword id="KW-0343">GTPase activation</keyword>
<keyword id="KW-0690">Ribosome biogenesis</keyword>
<evidence type="ECO:0000255" key="1">
    <source>
        <dbReference type="HAMAP-Rule" id="MF_01058"/>
    </source>
</evidence>
<evidence type="ECO:0000256" key="2">
    <source>
        <dbReference type="SAM" id="MobiDB-lite"/>
    </source>
</evidence>
<gene>
    <name evidence="1" type="primary">yihI</name>
    <name type="ordered locus">ECP_4076</name>
</gene>
<feature type="chain" id="PRO_1000064421" description="Der GTPase-activating protein YihI">
    <location>
        <begin position="1"/>
        <end position="169"/>
    </location>
</feature>
<feature type="region of interest" description="Disordered" evidence="2">
    <location>
        <begin position="1"/>
        <end position="98"/>
    </location>
</feature>
<feature type="region of interest" description="Disordered" evidence="2">
    <location>
        <begin position="144"/>
        <end position="169"/>
    </location>
</feature>
<feature type="compositionally biased region" description="Basic residues" evidence="2">
    <location>
        <begin position="10"/>
        <end position="19"/>
    </location>
</feature>
<feature type="compositionally biased region" description="Basic and acidic residues" evidence="2">
    <location>
        <begin position="20"/>
        <end position="30"/>
    </location>
</feature>
<feature type="compositionally biased region" description="Basic residues" evidence="2">
    <location>
        <begin position="31"/>
        <end position="40"/>
    </location>
</feature>
<feature type="compositionally biased region" description="Polar residues" evidence="2">
    <location>
        <begin position="49"/>
        <end position="58"/>
    </location>
</feature>
<feature type="compositionally biased region" description="Acidic residues" evidence="2">
    <location>
        <begin position="147"/>
        <end position="159"/>
    </location>
</feature>
<feature type="compositionally biased region" description="Basic and acidic residues" evidence="2">
    <location>
        <begin position="160"/>
        <end position="169"/>
    </location>
</feature>
<protein>
    <recommendedName>
        <fullName evidence="1">Der GTPase-activating protein YihI</fullName>
    </recommendedName>
</protein>
<comment type="function">
    <text evidence="1">A GTPase-activating protein (GAP) that modifies Der/EngA GTPase function. May play a role in ribosome biogenesis.</text>
</comment>
<comment type="subunit">
    <text evidence="1">Interacts with Der.</text>
</comment>
<comment type="similarity">
    <text evidence="1">Belongs to the YihI family.</text>
</comment>
<accession>Q0TAJ5</accession>
<organism>
    <name type="scientific">Escherichia coli O6:K15:H31 (strain 536 / UPEC)</name>
    <dbReference type="NCBI Taxonomy" id="362663"/>
    <lineage>
        <taxon>Bacteria</taxon>
        <taxon>Pseudomonadati</taxon>
        <taxon>Pseudomonadota</taxon>
        <taxon>Gammaproteobacteria</taxon>
        <taxon>Enterobacterales</taxon>
        <taxon>Enterobacteriaceae</taxon>
        <taxon>Escherichia</taxon>
    </lineage>
</organism>
<dbReference type="EMBL" id="CP000247">
    <property type="protein sequence ID" value="ABG72034.1"/>
    <property type="molecule type" value="Genomic_DNA"/>
</dbReference>
<dbReference type="RefSeq" id="WP_001298597.1">
    <property type="nucleotide sequence ID" value="NC_008253.1"/>
</dbReference>
<dbReference type="SMR" id="Q0TAJ5"/>
<dbReference type="KEGG" id="ecp:ECP_4076"/>
<dbReference type="HOGENOM" id="CLU_094104_2_0_6"/>
<dbReference type="Proteomes" id="UP000009182">
    <property type="component" value="Chromosome"/>
</dbReference>
<dbReference type="GO" id="GO:0005096">
    <property type="term" value="F:GTPase activator activity"/>
    <property type="evidence" value="ECO:0007669"/>
    <property type="project" value="UniProtKB-KW"/>
</dbReference>
<dbReference type="GO" id="GO:0042254">
    <property type="term" value="P:ribosome biogenesis"/>
    <property type="evidence" value="ECO:0007669"/>
    <property type="project" value="UniProtKB-KW"/>
</dbReference>
<dbReference type="HAMAP" id="MF_01058">
    <property type="entry name" value="GAP_YihI"/>
    <property type="match status" value="1"/>
</dbReference>
<dbReference type="InterPro" id="IPR007336">
    <property type="entry name" value="YihI"/>
</dbReference>
<dbReference type="NCBIfam" id="NF003560">
    <property type="entry name" value="PRK05244.1-1"/>
    <property type="match status" value="1"/>
</dbReference>
<dbReference type="Pfam" id="PF04220">
    <property type="entry name" value="YihI"/>
    <property type="match status" value="1"/>
</dbReference>
<reference key="1">
    <citation type="journal article" date="2006" name="Mol. Microbiol.">
        <title>Role of pathogenicity island-associated integrases in the genome plasticity of uropathogenic Escherichia coli strain 536.</title>
        <authorList>
            <person name="Hochhut B."/>
            <person name="Wilde C."/>
            <person name="Balling G."/>
            <person name="Middendorf B."/>
            <person name="Dobrindt U."/>
            <person name="Brzuszkiewicz E."/>
            <person name="Gottschalk G."/>
            <person name="Carniel E."/>
            <person name="Hacker J."/>
        </authorList>
    </citation>
    <scope>NUCLEOTIDE SEQUENCE [LARGE SCALE GENOMIC DNA]</scope>
    <source>
        <strain>536 / UPEC</strain>
    </source>
</reference>
<proteinExistence type="inferred from homology"/>